<gene>
    <name evidence="1" type="primary">ubiE</name>
    <name type="ordered locus">SPAB_04926</name>
</gene>
<organism>
    <name type="scientific">Salmonella paratyphi B (strain ATCC BAA-1250 / SPB7)</name>
    <dbReference type="NCBI Taxonomy" id="1016998"/>
    <lineage>
        <taxon>Bacteria</taxon>
        <taxon>Pseudomonadati</taxon>
        <taxon>Pseudomonadota</taxon>
        <taxon>Gammaproteobacteria</taxon>
        <taxon>Enterobacterales</taxon>
        <taxon>Enterobacteriaceae</taxon>
        <taxon>Salmonella</taxon>
    </lineage>
</organism>
<sequence>MVEDSQETTHFGFQTVAKEQKADMVAHVFHSVASKYDVMNDLMSFGIHRLWKRFTIDCSGVRRGQTVLDLAGGTGDLTAKFSRMVGETGKVILADINDSMLKMGREKLRNIGVIGNVEYVQANAEALPFPDNTFDCITISFGLRNVTEKEKALRSMFRVLKPGGRLLVLEFSKPIIEPLSKAYDAYSFHILPRIGSMVANDADSYRYLAESIRMHPDQDTLKAMMQDAGFESVDYYNLTAGVVALHRGYKF</sequence>
<keyword id="KW-0474">Menaquinone biosynthesis</keyword>
<keyword id="KW-0489">Methyltransferase</keyword>
<keyword id="KW-0949">S-adenosyl-L-methionine</keyword>
<keyword id="KW-0808">Transferase</keyword>
<keyword id="KW-0831">Ubiquinone biosynthesis</keyword>
<name>UBIE_SALPB</name>
<dbReference type="EC" id="2.1.1.163" evidence="1"/>
<dbReference type="EC" id="2.1.1.201" evidence="1"/>
<dbReference type="EMBL" id="CP000886">
    <property type="protein sequence ID" value="ABX70225.1"/>
    <property type="molecule type" value="Genomic_DNA"/>
</dbReference>
<dbReference type="RefSeq" id="WP_000229009.1">
    <property type="nucleotide sequence ID" value="NC_010102.1"/>
</dbReference>
<dbReference type="SMR" id="A9MY97"/>
<dbReference type="KEGG" id="spq:SPAB_04926"/>
<dbReference type="PATRIC" id="fig|1016998.12.peg.4625"/>
<dbReference type="HOGENOM" id="CLU_037990_0_0_6"/>
<dbReference type="BioCyc" id="SENT1016998:SPAB_RS20030-MONOMER"/>
<dbReference type="UniPathway" id="UPA00079">
    <property type="reaction ID" value="UER00169"/>
</dbReference>
<dbReference type="UniPathway" id="UPA00232"/>
<dbReference type="Proteomes" id="UP000008556">
    <property type="component" value="Chromosome"/>
</dbReference>
<dbReference type="GO" id="GO:0008425">
    <property type="term" value="F:2-methoxy-6-polyprenyl-1,4-benzoquinol methyltransferase activity"/>
    <property type="evidence" value="ECO:0007669"/>
    <property type="project" value="UniProtKB-UniRule"/>
</dbReference>
<dbReference type="GO" id="GO:0043770">
    <property type="term" value="F:demethylmenaquinone methyltransferase activity"/>
    <property type="evidence" value="ECO:0007669"/>
    <property type="project" value="UniProtKB-UniRule"/>
</dbReference>
<dbReference type="GO" id="GO:0009060">
    <property type="term" value="P:aerobic respiration"/>
    <property type="evidence" value="ECO:0007669"/>
    <property type="project" value="UniProtKB-UniRule"/>
</dbReference>
<dbReference type="GO" id="GO:0009234">
    <property type="term" value="P:menaquinone biosynthetic process"/>
    <property type="evidence" value="ECO:0007669"/>
    <property type="project" value="UniProtKB-UniRule"/>
</dbReference>
<dbReference type="GO" id="GO:0032259">
    <property type="term" value="P:methylation"/>
    <property type="evidence" value="ECO:0007669"/>
    <property type="project" value="UniProtKB-KW"/>
</dbReference>
<dbReference type="CDD" id="cd02440">
    <property type="entry name" value="AdoMet_MTases"/>
    <property type="match status" value="1"/>
</dbReference>
<dbReference type="FunFam" id="3.40.50.150:FF:000014">
    <property type="entry name" value="Ubiquinone/menaquinone biosynthesis C-methyltransferase UbiE"/>
    <property type="match status" value="1"/>
</dbReference>
<dbReference type="Gene3D" id="3.40.50.150">
    <property type="entry name" value="Vaccinia Virus protein VP39"/>
    <property type="match status" value="1"/>
</dbReference>
<dbReference type="HAMAP" id="MF_01813">
    <property type="entry name" value="MenG_UbiE_methyltr"/>
    <property type="match status" value="1"/>
</dbReference>
<dbReference type="InterPro" id="IPR029063">
    <property type="entry name" value="SAM-dependent_MTases_sf"/>
</dbReference>
<dbReference type="InterPro" id="IPR004033">
    <property type="entry name" value="UbiE/COQ5_MeTrFase"/>
</dbReference>
<dbReference type="InterPro" id="IPR023576">
    <property type="entry name" value="UbiE/COQ5_MeTrFase_CS"/>
</dbReference>
<dbReference type="NCBIfam" id="TIGR01934">
    <property type="entry name" value="MenG_MenH_UbiE"/>
    <property type="match status" value="1"/>
</dbReference>
<dbReference type="NCBIfam" id="NF001240">
    <property type="entry name" value="PRK00216.1-1"/>
    <property type="match status" value="1"/>
</dbReference>
<dbReference type="NCBIfam" id="NF001242">
    <property type="entry name" value="PRK00216.1-3"/>
    <property type="match status" value="1"/>
</dbReference>
<dbReference type="NCBIfam" id="NF001244">
    <property type="entry name" value="PRK00216.1-5"/>
    <property type="match status" value="1"/>
</dbReference>
<dbReference type="PANTHER" id="PTHR43591:SF24">
    <property type="entry name" value="2-METHOXY-6-POLYPRENYL-1,4-BENZOQUINOL METHYLASE, MITOCHONDRIAL"/>
    <property type="match status" value="1"/>
</dbReference>
<dbReference type="PANTHER" id="PTHR43591">
    <property type="entry name" value="METHYLTRANSFERASE"/>
    <property type="match status" value="1"/>
</dbReference>
<dbReference type="Pfam" id="PF01209">
    <property type="entry name" value="Ubie_methyltran"/>
    <property type="match status" value="1"/>
</dbReference>
<dbReference type="SUPFAM" id="SSF53335">
    <property type="entry name" value="S-adenosyl-L-methionine-dependent methyltransferases"/>
    <property type="match status" value="1"/>
</dbReference>
<dbReference type="PROSITE" id="PS51608">
    <property type="entry name" value="SAM_MT_UBIE"/>
    <property type="match status" value="1"/>
</dbReference>
<dbReference type="PROSITE" id="PS01183">
    <property type="entry name" value="UBIE_1"/>
    <property type="match status" value="1"/>
</dbReference>
<dbReference type="PROSITE" id="PS01184">
    <property type="entry name" value="UBIE_2"/>
    <property type="match status" value="1"/>
</dbReference>
<evidence type="ECO:0000255" key="1">
    <source>
        <dbReference type="HAMAP-Rule" id="MF_01813"/>
    </source>
</evidence>
<reference key="1">
    <citation type="submission" date="2007-11" db="EMBL/GenBank/DDBJ databases">
        <authorList>
            <consortium name="The Salmonella enterica serovar Paratyphi B Genome Sequencing Project"/>
            <person name="McClelland M."/>
            <person name="Sanderson E.K."/>
            <person name="Porwollik S."/>
            <person name="Spieth J."/>
            <person name="Clifton W.S."/>
            <person name="Fulton R."/>
            <person name="Cordes M."/>
            <person name="Wollam A."/>
            <person name="Shah N."/>
            <person name="Pepin K."/>
            <person name="Bhonagiri V."/>
            <person name="Nash W."/>
            <person name="Johnson M."/>
            <person name="Thiruvilangam P."/>
            <person name="Wilson R."/>
        </authorList>
    </citation>
    <scope>NUCLEOTIDE SEQUENCE [LARGE SCALE GENOMIC DNA]</scope>
    <source>
        <strain>ATCC BAA-1250 / SPB7</strain>
    </source>
</reference>
<proteinExistence type="inferred from homology"/>
<accession>A9MY97</accession>
<comment type="function">
    <text evidence="1">Methyltransferase required for the conversion of demethylmenaquinol (DMKH2) to menaquinol (MKH2) and the conversion of 2-polyprenyl-6-methoxy-1,4-benzoquinol (DDMQH2) to 2-polyprenyl-3-methyl-6-methoxy-1,4-benzoquinol (DMQH2).</text>
</comment>
<comment type="catalytic activity">
    <reaction evidence="1">
        <text>a 2-demethylmenaquinol + S-adenosyl-L-methionine = a menaquinol + S-adenosyl-L-homocysteine + H(+)</text>
        <dbReference type="Rhea" id="RHEA:42640"/>
        <dbReference type="Rhea" id="RHEA-COMP:9539"/>
        <dbReference type="Rhea" id="RHEA-COMP:9563"/>
        <dbReference type="ChEBI" id="CHEBI:15378"/>
        <dbReference type="ChEBI" id="CHEBI:18151"/>
        <dbReference type="ChEBI" id="CHEBI:55437"/>
        <dbReference type="ChEBI" id="CHEBI:57856"/>
        <dbReference type="ChEBI" id="CHEBI:59789"/>
        <dbReference type="EC" id="2.1.1.163"/>
    </reaction>
</comment>
<comment type="catalytic activity">
    <reaction evidence="1">
        <text>a 2-methoxy-6-(all-trans-polyprenyl)benzene-1,4-diol + S-adenosyl-L-methionine = a 5-methoxy-2-methyl-3-(all-trans-polyprenyl)benzene-1,4-diol + S-adenosyl-L-homocysteine + H(+)</text>
        <dbReference type="Rhea" id="RHEA:28286"/>
        <dbReference type="Rhea" id="RHEA-COMP:10858"/>
        <dbReference type="Rhea" id="RHEA-COMP:10859"/>
        <dbReference type="ChEBI" id="CHEBI:15378"/>
        <dbReference type="ChEBI" id="CHEBI:57856"/>
        <dbReference type="ChEBI" id="CHEBI:59789"/>
        <dbReference type="ChEBI" id="CHEBI:84166"/>
        <dbReference type="ChEBI" id="CHEBI:84167"/>
        <dbReference type="EC" id="2.1.1.201"/>
    </reaction>
</comment>
<comment type="pathway">
    <text evidence="1">Quinol/quinone metabolism; menaquinone biosynthesis; menaquinol from 1,4-dihydroxy-2-naphthoate: step 2/2.</text>
</comment>
<comment type="pathway">
    <text evidence="1">Cofactor biosynthesis; ubiquinone biosynthesis.</text>
</comment>
<comment type="similarity">
    <text evidence="1">Belongs to the class I-like SAM-binding methyltransferase superfamily. MenG/UbiE family.</text>
</comment>
<feature type="chain" id="PRO_1000088294" description="Ubiquinone/menaquinone biosynthesis C-methyltransferase UbiE">
    <location>
        <begin position="1"/>
        <end position="251"/>
    </location>
</feature>
<feature type="binding site" evidence="1">
    <location>
        <position position="74"/>
    </location>
    <ligand>
        <name>S-adenosyl-L-methionine</name>
        <dbReference type="ChEBI" id="CHEBI:59789"/>
    </ligand>
</feature>
<feature type="binding site" evidence="1">
    <location>
        <position position="95"/>
    </location>
    <ligand>
        <name>S-adenosyl-L-methionine</name>
        <dbReference type="ChEBI" id="CHEBI:59789"/>
    </ligand>
</feature>
<feature type="binding site" evidence="1">
    <location>
        <begin position="123"/>
        <end position="124"/>
    </location>
    <ligand>
        <name>S-adenosyl-L-methionine</name>
        <dbReference type="ChEBI" id="CHEBI:59789"/>
    </ligand>
</feature>
<feature type="binding site" evidence="1">
    <location>
        <position position="140"/>
    </location>
    <ligand>
        <name>S-adenosyl-L-methionine</name>
        <dbReference type="ChEBI" id="CHEBI:59789"/>
    </ligand>
</feature>
<protein>
    <recommendedName>
        <fullName evidence="1">Ubiquinone/menaquinone biosynthesis C-methyltransferase UbiE</fullName>
        <ecNumber evidence="1">2.1.1.163</ecNumber>
        <ecNumber evidence="1">2.1.1.201</ecNumber>
    </recommendedName>
    <alternativeName>
        <fullName evidence="1">2-methoxy-6-polyprenyl-1,4-benzoquinol methylase</fullName>
    </alternativeName>
    <alternativeName>
        <fullName evidence="1">Demethylmenaquinone methyltransferase</fullName>
    </alternativeName>
</protein>